<reference key="1">
    <citation type="journal article" date="1992" name="Exp. Eye Res.">
        <title>Isolation of a cDNA encoding a glutathione S-transferase (GST) class-pi from the bovine ocular ciliary epithelium.</title>
        <authorList>
            <person name="Hernando N."/>
            <person name="Martin-Alonso J.M."/>
            <person name="Ghosh S."/>
            <person name="Coca-Prados M."/>
        </authorList>
    </citation>
    <scope>NUCLEOTIDE SEQUENCE [MRNA]</scope>
    <source>
        <tissue>Ocular ciliary epithelium</tissue>
    </source>
</reference>
<reference key="2">
    <citation type="submission" date="2005-08" db="EMBL/GenBank/DDBJ databases">
        <authorList>
            <consortium name="NIH - Mammalian Gene Collection (MGC) project"/>
        </authorList>
    </citation>
    <scope>NUCLEOTIDE SEQUENCE [LARGE SCALE MRNA]</scope>
    <source>
        <strain>Crossbred X Angus</strain>
        <tissue>Ileum</tissue>
    </source>
</reference>
<reference key="3">
    <citation type="journal article" date="1988" name="J. Biol. Chem.">
        <title>Glutathione transferase from bovine placenta. Preparation, biochemical characterization, crystallization, and preliminary crystallographic analysis of a neutral class PI enzyme.</title>
        <authorList>
            <person name="Schaeffer J."/>
            <person name="Gallay O."/>
            <person name="Ladenstein R."/>
        </authorList>
    </citation>
    <scope>PROTEIN SEQUENCE OF 2-16</scope>
    <scope>SUBUNIT</scope>
    <source>
        <tissue>Placenta</tissue>
    </source>
</reference>
<reference key="4">
    <citation type="journal article" date="1992" name="Biochem. Int.">
        <title>Bovine erythrocyte glutathione S-transferase: purification, inhibition, and complex formation.</title>
        <authorList>
            <person name="Xu F."/>
            <person name="Hultquist D.E."/>
        </authorList>
    </citation>
    <scope>PROTEIN SEQUENCE OF 3-23</scope>
    <source>
        <tissue>Erythrocyte</tissue>
    </source>
</reference>
<dbReference type="EC" id="2.5.1.18" evidence="2"/>
<dbReference type="EMBL" id="X61233">
    <property type="protein sequence ID" value="CAA43551.1"/>
    <property type="molecule type" value="mRNA"/>
</dbReference>
<dbReference type="EMBL" id="BC102704">
    <property type="protein sequence ID" value="AAI02705.1"/>
    <property type="molecule type" value="mRNA"/>
</dbReference>
<dbReference type="PIR" id="A49180">
    <property type="entry name" value="A49180"/>
</dbReference>
<dbReference type="RefSeq" id="NP_803482.1">
    <property type="nucleotide sequence ID" value="NM_177516.1"/>
</dbReference>
<dbReference type="SMR" id="P28801"/>
<dbReference type="FunCoup" id="P28801">
    <property type="interactions" value="393"/>
</dbReference>
<dbReference type="STRING" id="9913.ENSBTAP00000061249"/>
<dbReference type="PaxDb" id="9913-ENSBTAP00000004615"/>
<dbReference type="PeptideAtlas" id="P28801"/>
<dbReference type="GeneID" id="281806"/>
<dbReference type="KEGG" id="bta:281806"/>
<dbReference type="eggNOG" id="KOG1695">
    <property type="taxonomic scope" value="Eukaryota"/>
</dbReference>
<dbReference type="HOGENOM" id="CLU_039475_2_1_1"/>
<dbReference type="InParanoid" id="P28801"/>
<dbReference type="OrthoDB" id="4951845at2759"/>
<dbReference type="TreeFam" id="TF105321"/>
<dbReference type="Proteomes" id="UP000009136">
    <property type="component" value="Unplaced"/>
</dbReference>
<dbReference type="GO" id="GO:0005829">
    <property type="term" value="C:cytosol"/>
    <property type="evidence" value="ECO:0000318"/>
    <property type="project" value="GO_Central"/>
</dbReference>
<dbReference type="GO" id="GO:0005739">
    <property type="term" value="C:mitochondrion"/>
    <property type="evidence" value="ECO:0007669"/>
    <property type="project" value="UniProtKB-SubCell"/>
</dbReference>
<dbReference type="GO" id="GO:0005634">
    <property type="term" value="C:nucleus"/>
    <property type="evidence" value="ECO:0007669"/>
    <property type="project" value="UniProtKB-SubCell"/>
</dbReference>
<dbReference type="GO" id="GO:0004364">
    <property type="term" value="F:glutathione transferase activity"/>
    <property type="evidence" value="ECO:0000250"/>
    <property type="project" value="UniProtKB"/>
</dbReference>
<dbReference type="GO" id="GO:1901687">
    <property type="term" value="P:glutathione derivative biosynthetic process"/>
    <property type="evidence" value="ECO:0000250"/>
    <property type="project" value="UniProtKB"/>
</dbReference>
<dbReference type="GO" id="GO:0006749">
    <property type="term" value="P:glutathione metabolic process"/>
    <property type="evidence" value="ECO:0000318"/>
    <property type="project" value="GO_Central"/>
</dbReference>
<dbReference type="GO" id="GO:0051122">
    <property type="term" value="P:hepoxilin biosynthetic process"/>
    <property type="evidence" value="ECO:0000250"/>
    <property type="project" value="UniProtKB"/>
</dbReference>
<dbReference type="GO" id="GO:0006693">
    <property type="term" value="P:prostaglandin metabolic process"/>
    <property type="evidence" value="ECO:0000250"/>
    <property type="project" value="UniProtKB"/>
</dbReference>
<dbReference type="CDD" id="cd03210">
    <property type="entry name" value="GST_C_Pi"/>
    <property type="match status" value="1"/>
</dbReference>
<dbReference type="CDD" id="cd03076">
    <property type="entry name" value="GST_N_Pi"/>
    <property type="match status" value="1"/>
</dbReference>
<dbReference type="FunFam" id="1.20.1050.10:FF:000047">
    <property type="entry name" value="Glutathione S-transferase P"/>
    <property type="match status" value="1"/>
</dbReference>
<dbReference type="FunFam" id="3.40.30.10:FF:000071">
    <property type="entry name" value="Glutathione S-transferase P"/>
    <property type="match status" value="1"/>
</dbReference>
<dbReference type="FunFam" id="3.40.30.10:FF:000392">
    <property type="entry name" value="Glutathione S-transferase pi 1"/>
    <property type="match status" value="1"/>
</dbReference>
<dbReference type="Gene3D" id="1.20.1050.10">
    <property type="match status" value="1"/>
</dbReference>
<dbReference type="Gene3D" id="3.40.30.10">
    <property type="entry name" value="Glutaredoxin"/>
    <property type="match status" value="1"/>
</dbReference>
<dbReference type="InterPro" id="IPR010987">
    <property type="entry name" value="Glutathione-S-Trfase_C-like"/>
</dbReference>
<dbReference type="InterPro" id="IPR036282">
    <property type="entry name" value="Glutathione-S-Trfase_C_sf"/>
</dbReference>
<dbReference type="InterPro" id="IPR040079">
    <property type="entry name" value="Glutathione_S-Trfase"/>
</dbReference>
<dbReference type="InterPro" id="IPR004045">
    <property type="entry name" value="Glutathione_S-Trfase_N"/>
</dbReference>
<dbReference type="InterPro" id="IPR004046">
    <property type="entry name" value="GST_C"/>
</dbReference>
<dbReference type="InterPro" id="IPR003082">
    <property type="entry name" value="GST_pi"/>
</dbReference>
<dbReference type="InterPro" id="IPR050213">
    <property type="entry name" value="GST_superfamily"/>
</dbReference>
<dbReference type="InterPro" id="IPR036249">
    <property type="entry name" value="Thioredoxin-like_sf"/>
</dbReference>
<dbReference type="PANTHER" id="PTHR11571">
    <property type="entry name" value="GLUTATHIONE S-TRANSFERASE"/>
    <property type="match status" value="1"/>
</dbReference>
<dbReference type="PANTHER" id="PTHR11571:SF255">
    <property type="entry name" value="GLUTATHIONE S-TRANSFERASE P"/>
    <property type="match status" value="1"/>
</dbReference>
<dbReference type="Pfam" id="PF14497">
    <property type="entry name" value="GST_C_3"/>
    <property type="match status" value="1"/>
</dbReference>
<dbReference type="Pfam" id="PF02798">
    <property type="entry name" value="GST_N"/>
    <property type="match status" value="1"/>
</dbReference>
<dbReference type="PRINTS" id="PR01268">
    <property type="entry name" value="GSTRNSFRASEP"/>
</dbReference>
<dbReference type="SFLD" id="SFLDG01205">
    <property type="entry name" value="AMPS.1"/>
    <property type="match status" value="1"/>
</dbReference>
<dbReference type="SFLD" id="SFLDS00019">
    <property type="entry name" value="Glutathione_Transferase_(cytos"/>
    <property type="match status" value="1"/>
</dbReference>
<dbReference type="SUPFAM" id="SSF47616">
    <property type="entry name" value="GST C-terminal domain-like"/>
    <property type="match status" value="1"/>
</dbReference>
<dbReference type="SUPFAM" id="SSF52833">
    <property type="entry name" value="Thioredoxin-like"/>
    <property type="match status" value="1"/>
</dbReference>
<dbReference type="PROSITE" id="PS50405">
    <property type="entry name" value="GST_CTER"/>
    <property type="match status" value="1"/>
</dbReference>
<dbReference type="PROSITE" id="PS50404">
    <property type="entry name" value="GST_NTER"/>
    <property type="match status" value="1"/>
</dbReference>
<name>GSTP1_BOVIN</name>
<gene>
    <name type="primary">GSTP1</name>
</gene>
<keyword id="KW-0007">Acetylation</keyword>
<keyword id="KW-0963">Cytoplasm</keyword>
<keyword id="KW-0903">Direct protein sequencing</keyword>
<keyword id="KW-0443">Lipid metabolism</keyword>
<keyword id="KW-0496">Mitochondrion</keyword>
<keyword id="KW-0539">Nucleus</keyword>
<keyword id="KW-0597">Phosphoprotein</keyword>
<keyword id="KW-1185">Reference proteome</keyword>
<keyword id="KW-0808">Transferase</keyword>
<feature type="initiator methionine" description="Removed" evidence="4">
    <location>
        <position position="1"/>
    </location>
</feature>
<feature type="chain" id="PRO_0000185896" description="Glutathione S-transferase P">
    <location>
        <begin position="2"/>
        <end position="210"/>
    </location>
</feature>
<feature type="domain" description="GST N-terminal">
    <location>
        <begin position="2"/>
        <end position="81"/>
    </location>
</feature>
<feature type="domain" description="GST C-terminal">
    <location>
        <begin position="83"/>
        <end position="204"/>
    </location>
</feature>
<feature type="binding site" evidence="2">
    <location>
        <position position="8"/>
    </location>
    <ligand>
        <name>glutathione</name>
        <dbReference type="ChEBI" id="CHEBI:57925"/>
    </ligand>
</feature>
<feature type="binding site" evidence="2">
    <location>
        <position position="14"/>
    </location>
    <ligand>
        <name>glutathione</name>
        <dbReference type="ChEBI" id="CHEBI:57925"/>
    </ligand>
</feature>
<feature type="binding site" evidence="2">
    <location>
        <position position="39"/>
    </location>
    <ligand>
        <name>glutathione</name>
        <dbReference type="ChEBI" id="CHEBI:57925"/>
    </ligand>
</feature>
<feature type="binding site" evidence="2">
    <location>
        <position position="45"/>
    </location>
    <ligand>
        <name>glutathione</name>
        <dbReference type="ChEBI" id="CHEBI:57925"/>
    </ligand>
</feature>
<feature type="binding site" evidence="2">
    <location>
        <begin position="52"/>
        <end position="53"/>
    </location>
    <ligand>
        <name>glutathione</name>
        <dbReference type="ChEBI" id="CHEBI:57925"/>
    </ligand>
</feature>
<feature type="binding site" evidence="2">
    <location>
        <begin position="65"/>
        <end position="66"/>
    </location>
    <ligand>
        <name>glutathione</name>
        <dbReference type="ChEBI" id="CHEBI:57925"/>
    </ligand>
</feature>
<feature type="modified residue" description="Phosphotyrosine; by EGFR" evidence="2">
    <location>
        <position position="4"/>
    </location>
</feature>
<feature type="modified residue" description="Phosphothreonine" evidence="2">
    <location>
        <position position="62"/>
    </location>
</feature>
<feature type="modified residue" description="N6-succinyllysine" evidence="3">
    <location>
        <position position="103"/>
    </location>
</feature>
<feature type="modified residue" description="N6-succinyllysine" evidence="3">
    <location>
        <position position="116"/>
    </location>
</feature>
<feature type="modified residue" description="N6-acetyllysine" evidence="2">
    <location>
        <position position="128"/>
    </location>
</feature>
<comment type="function">
    <text evidence="2">Conjugation of reduced glutathione to a wide number of exogenous and endogenous hydrophobic electrophiles. Involved in the formation of glutathione conjugates of both prostaglandin A2 (PGA2) and prostaglandin J2 (PGJ2). Participates in the formation of novel hepoxilin regioisomers. Negatively regulates CDK5 activity via p25/p35 translocation to prevent neurodegeneration.</text>
</comment>
<comment type="catalytic activity">
    <reaction evidence="2">
        <text>RX + glutathione = an S-substituted glutathione + a halide anion + H(+)</text>
        <dbReference type="Rhea" id="RHEA:16437"/>
        <dbReference type="ChEBI" id="CHEBI:15378"/>
        <dbReference type="ChEBI" id="CHEBI:16042"/>
        <dbReference type="ChEBI" id="CHEBI:17792"/>
        <dbReference type="ChEBI" id="CHEBI:57925"/>
        <dbReference type="ChEBI" id="CHEBI:90779"/>
        <dbReference type="EC" id="2.5.1.18"/>
    </reaction>
    <physiologicalReaction direction="left-to-right" evidence="2">
        <dbReference type="Rhea" id="RHEA:16438"/>
    </physiologicalReaction>
</comment>
<comment type="catalytic activity">
    <reaction evidence="2">
        <text>prostaglandin J2 + glutathione = prostaglandin J2-S-(R)-glutathione</text>
        <dbReference type="Rhea" id="RHEA:50804"/>
        <dbReference type="ChEBI" id="CHEBI:57925"/>
        <dbReference type="ChEBI" id="CHEBI:133396"/>
        <dbReference type="ChEBI" id="CHEBI:133771"/>
    </reaction>
    <physiologicalReaction direction="left-to-right" evidence="2">
        <dbReference type="Rhea" id="RHEA:50805"/>
    </physiologicalReaction>
</comment>
<comment type="catalytic activity">
    <reaction evidence="2">
        <text>prostaglandin J2 + glutathione = prostaglandin J2-S-(S)-glutathione</text>
        <dbReference type="Rhea" id="RHEA:50808"/>
        <dbReference type="ChEBI" id="CHEBI:57925"/>
        <dbReference type="ChEBI" id="CHEBI:133396"/>
        <dbReference type="ChEBI" id="CHEBI:133772"/>
    </reaction>
    <physiologicalReaction direction="left-to-right" evidence="2">
        <dbReference type="Rhea" id="RHEA:50809"/>
    </physiologicalReaction>
</comment>
<comment type="catalytic activity">
    <reaction evidence="2">
        <text>prostaglandin A2 + glutathione = prostaglandin A2-S-(S)-glutathione</text>
        <dbReference type="Rhea" id="RHEA:50800"/>
        <dbReference type="ChEBI" id="CHEBI:57925"/>
        <dbReference type="ChEBI" id="CHEBI:133370"/>
        <dbReference type="ChEBI" id="CHEBI:133769"/>
    </reaction>
    <physiologicalReaction direction="left-to-right" evidence="2">
        <dbReference type="Rhea" id="RHEA:50801"/>
    </physiologicalReaction>
</comment>
<comment type="catalytic activity">
    <reaction evidence="2">
        <text>11(S)-hydroxy-14(S),15(S)-epoxy-(5Z,8Z,12E)-eicosatrienoate + glutathione = (11S,15S)-dihydroxy-14(R)-S-glutathionyl-(5Z,8Z,12E)-eicosatrienoate</text>
        <dbReference type="Rhea" id="RHEA:50260"/>
        <dbReference type="ChEBI" id="CHEBI:57925"/>
        <dbReference type="ChEBI" id="CHEBI:132200"/>
        <dbReference type="ChEBI" id="CHEBI:132201"/>
    </reaction>
    <physiologicalReaction direction="left-to-right" evidence="2">
        <dbReference type="Rhea" id="RHEA:50261"/>
    </physiologicalReaction>
</comment>
<comment type="subunit">
    <text evidence="1">Homodimer. Interacts with CDK5 (By similarity).</text>
</comment>
<comment type="subcellular location">
    <subcellularLocation>
        <location evidence="1">Cytoplasm</location>
    </subcellularLocation>
    <subcellularLocation>
        <location evidence="1">Mitochondrion</location>
    </subcellularLocation>
    <subcellularLocation>
        <location evidence="1">Nucleus</location>
    </subcellularLocation>
    <text evidence="1">The 83 N-terminal amino acids function as un uncleaved transit peptide, and arginine residues within it are crucial for mitochondrial localization.</text>
</comment>
<comment type="similarity">
    <text evidence="5">Belongs to the GST superfamily. Pi family.</text>
</comment>
<sequence length="210" mass="23613">MPPYTIVYFPVQGRCEAMRMLLADQGQSWKEEVVAMQSWLQGPLKASCLYGQLPKFQDGDLTLYQSNAILRHLGRTLGLYGKDQQEAALVDMVNDGVEDLRCKYVSLIYTNYEAGKEDYVKALPQHLKPFETLLSQNKGGQAFIVGDQISFADYNLLDLLRIHQVLAPSCLDSFPLLSAYVARLNSRPKLKAFLASPEHMNRPINGNGKQ</sequence>
<accession>P28801</accession>
<accession>Q3SZU6</accession>
<evidence type="ECO:0000250" key="1"/>
<evidence type="ECO:0000250" key="2">
    <source>
        <dbReference type="UniProtKB" id="P09211"/>
    </source>
</evidence>
<evidence type="ECO:0000250" key="3">
    <source>
        <dbReference type="UniProtKB" id="P19157"/>
    </source>
</evidence>
<evidence type="ECO:0000269" key="4">
    <source>
    </source>
</evidence>
<evidence type="ECO:0000305" key="5"/>
<organism>
    <name type="scientific">Bos taurus</name>
    <name type="common">Bovine</name>
    <dbReference type="NCBI Taxonomy" id="9913"/>
    <lineage>
        <taxon>Eukaryota</taxon>
        <taxon>Metazoa</taxon>
        <taxon>Chordata</taxon>
        <taxon>Craniata</taxon>
        <taxon>Vertebrata</taxon>
        <taxon>Euteleostomi</taxon>
        <taxon>Mammalia</taxon>
        <taxon>Eutheria</taxon>
        <taxon>Laurasiatheria</taxon>
        <taxon>Artiodactyla</taxon>
        <taxon>Ruminantia</taxon>
        <taxon>Pecora</taxon>
        <taxon>Bovidae</taxon>
        <taxon>Bovinae</taxon>
        <taxon>Bos</taxon>
    </lineage>
</organism>
<protein>
    <recommendedName>
        <fullName evidence="5">Glutathione S-transferase P</fullName>
        <ecNumber evidence="2">2.5.1.18</ecNumber>
    </recommendedName>
    <alternativeName>
        <fullName>GST class-pi</fullName>
    </alternativeName>
</protein>
<proteinExistence type="evidence at protein level"/>